<comment type="catalytic activity">
    <reaction evidence="2">
        <text>Hydrolysis of terminal, non-reducing beta-D-glucosyl residues with release of beta-D-glucose.</text>
        <dbReference type="EC" id="3.2.1.21"/>
    </reaction>
</comment>
<comment type="similarity">
    <text evidence="8">Belongs to the glycosyl hydrolase 1 family.</text>
</comment>
<comment type="sequence caution" evidence="8">
    <conflict type="erroneous initiation">
        <sequence resource="EMBL-CDS" id="BAF07205"/>
    </conflict>
    <text>Truncated N-terminus.</text>
</comment>
<accession>Q5JK35</accession>
<accession>A0A0P0VCE1</accession>
<accession>Q0JGC3</accession>
<organism>
    <name type="scientific">Oryza sativa subsp. japonica</name>
    <name type="common">Rice</name>
    <dbReference type="NCBI Taxonomy" id="39947"/>
    <lineage>
        <taxon>Eukaryota</taxon>
        <taxon>Viridiplantae</taxon>
        <taxon>Streptophyta</taxon>
        <taxon>Embryophyta</taxon>
        <taxon>Tracheophyta</taxon>
        <taxon>Spermatophyta</taxon>
        <taxon>Magnoliopsida</taxon>
        <taxon>Liliopsida</taxon>
        <taxon>Poales</taxon>
        <taxon>Poaceae</taxon>
        <taxon>BOP clade</taxon>
        <taxon>Oryzoideae</taxon>
        <taxon>Oryzeae</taxon>
        <taxon>Oryzinae</taxon>
        <taxon>Oryza</taxon>
        <taxon>Oryza sativa</taxon>
    </lineage>
</organism>
<dbReference type="EC" id="3.2.1.21" evidence="2"/>
<dbReference type="EMBL" id="AP003272">
    <property type="protein sequence ID" value="BAD87322.1"/>
    <property type="molecule type" value="Genomic_DNA"/>
</dbReference>
<dbReference type="EMBL" id="AP004330">
    <property type="protein sequence ID" value="BAD88178.1"/>
    <property type="molecule type" value="Genomic_DNA"/>
</dbReference>
<dbReference type="EMBL" id="AP008207">
    <property type="protein sequence ID" value="BAF07205.1"/>
    <property type="status" value="ALT_INIT"/>
    <property type="molecule type" value="Genomic_DNA"/>
</dbReference>
<dbReference type="EMBL" id="AP014957">
    <property type="protein sequence ID" value="BAS76034.1"/>
    <property type="molecule type" value="Genomic_DNA"/>
</dbReference>
<dbReference type="EMBL" id="AK119221">
    <property type="status" value="NOT_ANNOTATED_CDS"/>
    <property type="molecule type" value="mRNA"/>
</dbReference>
<dbReference type="RefSeq" id="XP_015615756.1">
    <property type="nucleotide sequence ID" value="XM_015760270.1"/>
</dbReference>
<dbReference type="SMR" id="Q5JK35"/>
<dbReference type="FunCoup" id="Q5JK35">
    <property type="interactions" value="164"/>
</dbReference>
<dbReference type="STRING" id="39947.Q5JK35"/>
<dbReference type="CAZy" id="GH1">
    <property type="family name" value="Glycoside Hydrolase Family 1"/>
</dbReference>
<dbReference type="GlyCosmos" id="Q5JK35">
    <property type="glycosylation" value="3 sites, No reported glycans"/>
</dbReference>
<dbReference type="PaxDb" id="39947-Q5JK35"/>
<dbReference type="EnsemblPlants" id="Os01t0930800-01">
    <property type="protein sequence ID" value="Os01t0930800-01"/>
    <property type="gene ID" value="Os01g0930800"/>
</dbReference>
<dbReference type="Gramene" id="Os01t0930800-01">
    <property type="protein sequence ID" value="Os01t0930800-01"/>
    <property type="gene ID" value="Os01g0930800"/>
</dbReference>
<dbReference type="KEGG" id="dosa:Os01g0930800"/>
<dbReference type="eggNOG" id="KOG0626">
    <property type="taxonomic scope" value="Eukaryota"/>
</dbReference>
<dbReference type="HOGENOM" id="CLU_001859_1_0_1"/>
<dbReference type="InParanoid" id="Q5JK35"/>
<dbReference type="OMA" id="QVHIMLY"/>
<dbReference type="OrthoDB" id="65569at2759"/>
<dbReference type="Proteomes" id="UP000000763">
    <property type="component" value="Chromosome 1"/>
</dbReference>
<dbReference type="Proteomes" id="UP000059680">
    <property type="component" value="Chromosome 1"/>
</dbReference>
<dbReference type="GO" id="GO:0033907">
    <property type="term" value="F:beta-D-fucosidase activity"/>
    <property type="evidence" value="ECO:0007669"/>
    <property type="project" value="UniProtKB-ARBA"/>
</dbReference>
<dbReference type="GO" id="GO:0004565">
    <property type="term" value="F:beta-galactosidase activity"/>
    <property type="evidence" value="ECO:0007669"/>
    <property type="project" value="UniProtKB-ARBA"/>
</dbReference>
<dbReference type="GO" id="GO:0008422">
    <property type="term" value="F:beta-glucosidase activity"/>
    <property type="evidence" value="ECO:0000318"/>
    <property type="project" value="GO_Central"/>
</dbReference>
<dbReference type="GO" id="GO:0005975">
    <property type="term" value="P:carbohydrate metabolic process"/>
    <property type="evidence" value="ECO:0007669"/>
    <property type="project" value="InterPro"/>
</dbReference>
<dbReference type="FunFam" id="3.20.20.80:FF:000069">
    <property type="entry name" value="Beta-glucosidase 1"/>
    <property type="match status" value="1"/>
</dbReference>
<dbReference type="Gene3D" id="3.20.20.80">
    <property type="entry name" value="Glycosidases"/>
    <property type="match status" value="1"/>
</dbReference>
<dbReference type="InterPro" id="IPR001360">
    <property type="entry name" value="Glyco_hydro_1"/>
</dbReference>
<dbReference type="InterPro" id="IPR033132">
    <property type="entry name" value="Glyco_hydro_1_N_CS"/>
</dbReference>
<dbReference type="InterPro" id="IPR017853">
    <property type="entry name" value="Glycoside_hydrolase_SF"/>
</dbReference>
<dbReference type="PANTHER" id="PTHR10353:SF335">
    <property type="entry name" value="BETA-GLUCOSIDASE 2"/>
    <property type="match status" value="1"/>
</dbReference>
<dbReference type="PANTHER" id="PTHR10353">
    <property type="entry name" value="GLYCOSYL HYDROLASE"/>
    <property type="match status" value="1"/>
</dbReference>
<dbReference type="Pfam" id="PF00232">
    <property type="entry name" value="Glyco_hydro_1"/>
    <property type="match status" value="1"/>
</dbReference>
<dbReference type="PRINTS" id="PR00131">
    <property type="entry name" value="GLHYDRLASE1"/>
</dbReference>
<dbReference type="SUPFAM" id="SSF51445">
    <property type="entry name" value="(Trans)glycosidases"/>
    <property type="match status" value="1"/>
</dbReference>
<dbReference type="PROSITE" id="PS00653">
    <property type="entry name" value="GLYCOSYL_HYDROL_F1_2"/>
    <property type="match status" value="1"/>
</dbReference>
<evidence type="ECO:0000250" key="1">
    <source>
        <dbReference type="UniProtKB" id="P49235"/>
    </source>
</evidence>
<evidence type="ECO:0000250" key="2">
    <source>
        <dbReference type="UniProtKB" id="Q75I94"/>
    </source>
</evidence>
<evidence type="ECO:0000250" key="3">
    <source>
        <dbReference type="UniProtKB" id="Q7XSK0"/>
    </source>
</evidence>
<evidence type="ECO:0000250" key="4">
    <source>
        <dbReference type="UniProtKB" id="Q8L7J2"/>
    </source>
</evidence>
<evidence type="ECO:0000250" key="5">
    <source>
        <dbReference type="UniProtKB" id="Q9SPP9"/>
    </source>
</evidence>
<evidence type="ECO:0000255" key="6"/>
<evidence type="ECO:0000255" key="7">
    <source>
        <dbReference type="PROSITE-ProRule" id="PRU00498"/>
    </source>
</evidence>
<evidence type="ECO:0000305" key="8"/>
<name>BGL05_ORYSJ</name>
<keyword id="KW-1015">Disulfide bond</keyword>
<keyword id="KW-0325">Glycoprotein</keyword>
<keyword id="KW-0326">Glycosidase</keyword>
<keyword id="KW-0378">Hydrolase</keyword>
<keyword id="KW-1185">Reference proteome</keyword>
<keyword id="KW-0732">Signal</keyword>
<gene>
    <name type="primary">BGLU5</name>
    <name type="ordered locus">Os01g0930800</name>
    <name type="ordered locus">LOC_Os01g70520</name>
    <name type="ORF">OSJNBa0052O12.35</name>
    <name type="ORF">P0506E04.13</name>
</gene>
<proteinExistence type="evidence at transcript level"/>
<sequence length="513" mass="57448">MAAAIAVVYLSLLLLLLHGAAPAVLGYTRGDFPEDFVFGSATSSYQYEGGFDEDGRSPSNWDIFTHQGKMPGRSTADVAADGYHKYKDDLKLMVDTNLEAYRLSISWSRIIPNGRGDVNPKGLQYYNDIIDGLVKNGIQVHIMLYQLDLPQVLEDEYDGWLSPRILEDFKAYADVCFKEFGDRVAHWITIDEPNVASIGSYDSGQLAPGRCSDPFGIRKCTVGNSSVEPYIAVHNMLLAHASVTKLYREKYQVAGKGIIGISVYTFWAYPLTNSTVDLEATKRCQDFIVHWVLRPLVFGDYPQVMKNIVGSRLPSFTKAQSEDVKGSLDFIGMNHYYSLYVNDRPLGKGTRDFVADISIYYRGSKTDPPPGKAAPTSIGPDPQGLRLMVQYLQETYGNLPIYILENGYGSSNDTVHDNDRVDYLKSYIGSILTALRNGANVKGYFVWSFVDVFEYLTGYGQSYGLYRVDFADESRPRQARLSARWYSGFLKNREMDVDQSELAMAAAESRAQQ</sequence>
<protein>
    <recommendedName>
        <fullName>Beta-glucosidase 5</fullName>
        <shortName>Os1bglu5</shortName>
        <ecNumber evidence="2">3.2.1.21</ecNumber>
    </recommendedName>
</protein>
<reference key="1">
    <citation type="journal article" date="2002" name="Nature">
        <title>The genome sequence and structure of rice chromosome 1.</title>
        <authorList>
            <person name="Sasaki T."/>
            <person name="Matsumoto T."/>
            <person name="Yamamoto K."/>
            <person name="Sakata K."/>
            <person name="Baba T."/>
            <person name="Katayose Y."/>
            <person name="Wu J."/>
            <person name="Niimura Y."/>
            <person name="Cheng Z."/>
            <person name="Nagamura Y."/>
            <person name="Antonio B.A."/>
            <person name="Kanamori H."/>
            <person name="Hosokawa S."/>
            <person name="Masukawa M."/>
            <person name="Arikawa K."/>
            <person name="Chiden Y."/>
            <person name="Hayashi M."/>
            <person name="Okamoto M."/>
            <person name="Ando T."/>
            <person name="Aoki H."/>
            <person name="Arita K."/>
            <person name="Hamada M."/>
            <person name="Harada C."/>
            <person name="Hijishita S."/>
            <person name="Honda M."/>
            <person name="Ichikawa Y."/>
            <person name="Idonuma A."/>
            <person name="Iijima M."/>
            <person name="Ikeda M."/>
            <person name="Ikeno M."/>
            <person name="Ito S."/>
            <person name="Ito T."/>
            <person name="Ito Y."/>
            <person name="Ito Y."/>
            <person name="Iwabuchi A."/>
            <person name="Kamiya K."/>
            <person name="Karasawa W."/>
            <person name="Katagiri S."/>
            <person name="Kikuta A."/>
            <person name="Kobayashi N."/>
            <person name="Kono I."/>
            <person name="Machita K."/>
            <person name="Maehara T."/>
            <person name="Mizuno H."/>
            <person name="Mizubayashi T."/>
            <person name="Mukai Y."/>
            <person name="Nagasaki H."/>
            <person name="Nakashima M."/>
            <person name="Nakama Y."/>
            <person name="Nakamichi Y."/>
            <person name="Nakamura M."/>
            <person name="Namiki N."/>
            <person name="Negishi M."/>
            <person name="Ohta I."/>
            <person name="Ono N."/>
            <person name="Saji S."/>
            <person name="Sakai K."/>
            <person name="Shibata M."/>
            <person name="Shimokawa T."/>
            <person name="Shomura A."/>
            <person name="Song J."/>
            <person name="Takazaki Y."/>
            <person name="Terasawa K."/>
            <person name="Tsuji K."/>
            <person name="Waki K."/>
            <person name="Yamagata H."/>
            <person name="Yamane H."/>
            <person name="Yoshiki S."/>
            <person name="Yoshihara R."/>
            <person name="Yukawa K."/>
            <person name="Zhong H."/>
            <person name="Iwama H."/>
            <person name="Endo T."/>
            <person name="Ito H."/>
            <person name="Hahn J.H."/>
            <person name="Kim H.-I."/>
            <person name="Eun M.-Y."/>
            <person name="Yano M."/>
            <person name="Jiang J."/>
            <person name="Gojobori T."/>
        </authorList>
    </citation>
    <scope>NUCLEOTIDE SEQUENCE [LARGE SCALE GENOMIC DNA]</scope>
    <source>
        <strain>cv. Nipponbare</strain>
    </source>
</reference>
<reference key="2">
    <citation type="journal article" date="2005" name="Nature">
        <title>The map-based sequence of the rice genome.</title>
        <authorList>
            <consortium name="International rice genome sequencing project (IRGSP)"/>
        </authorList>
    </citation>
    <scope>NUCLEOTIDE SEQUENCE [LARGE SCALE GENOMIC DNA]</scope>
    <source>
        <strain>cv. Nipponbare</strain>
    </source>
</reference>
<reference key="3">
    <citation type="journal article" date="2008" name="Nucleic Acids Res.">
        <title>The rice annotation project database (RAP-DB): 2008 update.</title>
        <authorList>
            <consortium name="The rice annotation project (RAP)"/>
        </authorList>
    </citation>
    <scope>GENOME REANNOTATION</scope>
    <source>
        <strain>cv. Nipponbare</strain>
    </source>
</reference>
<reference key="4">
    <citation type="journal article" date="2013" name="Rice">
        <title>Improvement of the Oryza sativa Nipponbare reference genome using next generation sequence and optical map data.</title>
        <authorList>
            <person name="Kawahara Y."/>
            <person name="de la Bastide M."/>
            <person name="Hamilton J.P."/>
            <person name="Kanamori H."/>
            <person name="McCombie W.R."/>
            <person name="Ouyang S."/>
            <person name="Schwartz D.C."/>
            <person name="Tanaka T."/>
            <person name="Wu J."/>
            <person name="Zhou S."/>
            <person name="Childs K.L."/>
            <person name="Davidson R.M."/>
            <person name="Lin H."/>
            <person name="Quesada-Ocampo L."/>
            <person name="Vaillancourt B."/>
            <person name="Sakai H."/>
            <person name="Lee S.S."/>
            <person name="Kim J."/>
            <person name="Numa H."/>
            <person name="Itoh T."/>
            <person name="Buell C.R."/>
            <person name="Matsumoto T."/>
        </authorList>
    </citation>
    <scope>GENOME REANNOTATION</scope>
    <source>
        <strain>cv. Nipponbare</strain>
    </source>
</reference>
<reference key="5">
    <citation type="journal article" date="2003" name="Science">
        <title>Collection, mapping, and annotation of over 28,000 cDNA clones from japonica rice.</title>
        <authorList>
            <consortium name="The rice full-length cDNA consortium"/>
        </authorList>
    </citation>
    <scope>NUCLEOTIDE SEQUENCE [LARGE SCALE MRNA]</scope>
    <source>
        <strain>cv. Nipponbare</strain>
    </source>
</reference>
<reference key="6">
    <citation type="journal article" date="2006" name="BMC Plant Biol.">
        <title>Analysis of rice glycosyl hydrolase family 1 and expression of Os4bglu12 beta-glucosidase.</title>
        <authorList>
            <person name="Opassiri R."/>
            <person name="Pomthong B."/>
            <person name="Onkoksoong T."/>
            <person name="Akiyama T."/>
            <person name="Esen A."/>
            <person name="Ketudat Cairns J.R."/>
        </authorList>
    </citation>
    <scope>GENE FAMILY</scope>
    <scope>NOMENCLATURE</scope>
</reference>
<feature type="signal peptide" evidence="6">
    <location>
        <begin position="1"/>
        <end position="26"/>
    </location>
</feature>
<feature type="chain" id="PRO_0000390324" description="Beta-glucosidase 5">
    <location>
        <begin position="27"/>
        <end position="513"/>
    </location>
</feature>
<feature type="active site" description="Proton donor" evidence="3">
    <location>
        <position position="192"/>
    </location>
</feature>
<feature type="active site" description="Nucleophile" evidence="3">
    <location>
        <position position="405"/>
    </location>
</feature>
<feature type="binding site" evidence="3">
    <location>
        <position position="46"/>
    </location>
    <ligand>
        <name>a beta-D-glucoside</name>
        <dbReference type="ChEBI" id="CHEBI:22798"/>
    </ligand>
</feature>
<feature type="binding site" evidence="3">
    <location>
        <position position="336"/>
    </location>
    <ligand>
        <name>a beta-D-glucoside</name>
        <dbReference type="ChEBI" id="CHEBI:22798"/>
    </ligand>
</feature>
<feature type="binding site" evidence="5">
    <location>
        <position position="405"/>
    </location>
    <ligand>
        <name>a beta-D-glucoside</name>
        <dbReference type="ChEBI" id="CHEBI:22798"/>
    </ligand>
</feature>
<feature type="binding site" evidence="3">
    <location>
        <position position="447"/>
    </location>
    <ligand>
        <name>a beta-D-glucoside</name>
        <dbReference type="ChEBI" id="CHEBI:22798"/>
    </ligand>
</feature>
<feature type="binding site" evidence="4">
    <location>
        <begin position="454"/>
        <end position="455"/>
    </location>
    <ligand>
        <name>a beta-D-glucoside</name>
        <dbReference type="ChEBI" id="CHEBI:22798"/>
    </ligand>
</feature>
<feature type="binding site" evidence="1">
    <location>
        <position position="463"/>
    </location>
    <ligand>
        <name>a beta-D-glucoside</name>
        <dbReference type="ChEBI" id="CHEBI:22798"/>
    </ligand>
</feature>
<feature type="glycosylation site" description="N-linked (GlcNAc...) asparagine" evidence="7">
    <location>
        <position position="224"/>
    </location>
</feature>
<feature type="glycosylation site" description="N-linked (GlcNAc...) asparagine" evidence="7">
    <location>
        <position position="273"/>
    </location>
</feature>
<feature type="glycosylation site" description="N-linked (GlcNAc...) asparagine" evidence="7">
    <location>
        <position position="412"/>
    </location>
</feature>
<feature type="disulfide bond" evidence="3">
    <location>
        <begin position="211"/>
        <end position="220"/>
    </location>
</feature>
<feature type="sequence conflict" description="In Ref. 5; AK119221." evidence="8" ref="5">
    <original>G</original>
    <variation>C</variation>
    <location>
        <position position="19"/>
    </location>
</feature>
<feature type="sequence conflict" description="In Ref. 5; AK119221." evidence="8" ref="5">
    <original>F</original>
    <variation>L</variation>
    <location>
        <position position="169"/>
    </location>
</feature>